<reference key="1">
    <citation type="journal article" date="1990" name="Nucleic Acids Res.">
        <title>Nucleotide sequences of psbB and psbH, the plastid encoded genes for CP47 and the 10 kDa phosphoprotein of photosystem II in Oenothera hookeri and argillicola.</title>
        <authorList>
            <person name="Offermann-Steinhard K."/>
            <person name="Herrmann R.G."/>
        </authorList>
    </citation>
    <scope>NUCLEOTIDE SEQUENCE [GENOMIC DNA]</scope>
</reference>
<reference key="2">
    <citation type="journal article" date="2000" name="Mol. Gen. Genet.">
        <title>Complete nucleotide sequence of the Oenothera elata plastid chromosome, representing plastome I of the five distinguishable Euoenothera plastomes.</title>
        <authorList>
            <person name="Hupfer H."/>
            <person name="Swiatek M."/>
            <person name="Hornung S."/>
            <person name="Herrmann R.G."/>
            <person name="Maier R.M."/>
            <person name="Chiu W.-L."/>
            <person name="Sears B."/>
        </authorList>
    </citation>
    <scope>NUCLEOTIDE SEQUENCE [LARGE SCALE GENOMIC DNA]</scope>
    <source>
        <strain>cv. Johansen</strain>
    </source>
</reference>
<gene>
    <name evidence="1" type="primary">psbN</name>
</gene>
<organism>
    <name type="scientific">Oenothera elata subsp. hookeri</name>
    <name type="common">Hooker's evening primrose</name>
    <name type="synonym">Oenothera hookeri</name>
    <dbReference type="NCBI Taxonomy" id="85636"/>
    <lineage>
        <taxon>Eukaryota</taxon>
        <taxon>Viridiplantae</taxon>
        <taxon>Streptophyta</taxon>
        <taxon>Embryophyta</taxon>
        <taxon>Tracheophyta</taxon>
        <taxon>Spermatophyta</taxon>
        <taxon>Magnoliopsida</taxon>
        <taxon>eudicotyledons</taxon>
        <taxon>Gunneridae</taxon>
        <taxon>Pentapetalae</taxon>
        <taxon>rosids</taxon>
        <taxon>malvids</taxon>
        <taxon>Myrtales</taxon>
        <taxon>Onagraceae</taxon>
        <taxon>Onagroideae</taxon>
        <taxon>Onagreae</taxon>
        <taxon>Oenothera</taxon>
    </lineage>
</organism>
<name>PSBN_OENEH</name>
<evidence type="ECO:0000255" key="1">
    <source>
        <dbReference type="HAMAP-Rule" id="MF_00293"/>
    </source>
</evidence>
<dbReference type="EMBL" id="X55899">
    <property type="protein sequence ID" value="CAA39389.1"/>
    <property type="molecule type" value="Genomic_DNA"/>
</dbReference>
<dbReference type="EMBL" id="AJ271079">
    <property type="protein sequence ID" value="CAB67187.1"/>
    <property type="molecule type" value="Genomic_DNA"/>
</dbReference>
<dbReference type="PIR" id="S12133">
    <property type="entry name" value="S12133"/>
</dbReference>
<dbReference type="RefSeq" id="NP_084721.1">
    <property type="nucleotide sequence ID" value="NC_002693.2"/>
</dbReference>
<dbReference type="SMR" id="P68857"/>
<dbReference type="GeneID" id="802715"/>
<dbReference type="GO" id="GO:0009535">
    <property type="term" value="C:chloroplast thylakoid membrane"/>
    <property type="evidence" value="ECO:0007669"/>
    <property type="project" value="UniProtKB-SubCell"/>
</dbReference>
<dbReference type="GO" id="GO:0015979">
    <property type="term" value="P:photosynthesis"/>
    <property type="evidence" value="ECO:0007669"/>
    <property type="project" value="InterPro"/>
</dbReference>
<dbReference type="HAMAP" id="MF_00293">
    <property type="entry name" value="PSII_PsbN"/>
    <property type="match status" value="1"/>
</dbReference>
<dbReference type="InterPro" id="IPR003398">
    <property type="entry name" value="PSII_PsbN"/>
</dbReference>
<dbReference type="PANTHER" id="PTHR35326">
    <property type="entry name" value="PROTEIN PSBN"/>
    <property type="match status" value="1"/>
</dbReference>
<dbReference type="PANTHER" id="PTHR35326:SF3">
    <property type="entry name" value="PROTEIN PSBN"/>
    <property type="match status" value="1"/>
</dbReference>
<dbReference type="Pfam" id="PF02468">
    <property type="entry name" value="PsbN"/>
    <property type="match status" value="1"/>
</dbReference>
<protein>
    <recommendedName>
        <fullName evidence="1">Protein PsbN</fullName>
    </recommendedName>
</protein>
<feature type="chain" id="PRO_0000207933" description="Protein PsbN">
    <location>
        <begin position="1"/>
        <end position="43"/>
    </location>
</feature>
<feature type="transmembrane region" description="Helical" evidence="1">
    <location>
        <begin position="5"/>
        <end position="27"/>
    </location>
</feature>
<keyword id="KW-0150">Chloroplast</keyword>
<keyword id="KW-0472">Membrane</keyword>
<keyword id="KW-0934">Plastid</keyword>
<keyword id="KW-0793">Thylakoid</keyword>
<keyword id="KW-0812">Transmembrane</keyword>
<keyword id="KW-1133">Transmembrane helix</keyword>
<geneLocation type="chloroplast"/>
<accession>P68857</accession>
<accession>P12171</accession>
<sequence length="43" mass="4662">METATLVAISISGLLVSFTGYALYTAFGQPSQQLRDPFEEHGD</sequence>
<proteinExistence type="inferred from homology"/>
<comment type="function">
    <text evidence="1">May play a role in photosystem I and II biogenesis.</text>
</comment>
<comment type="subcellular location">
    <subcellularLocation>
        <location evidence="1">Plastid</location>
        <location evidence="1">Chloroplast thylakoid membrane</location>
        <topology evidence="1">Single-pass membrane protein</topology>
    </subcellularLocation>
</comment>
<comment type="similarity">
    <text evidence="1">Belongs to the PsbN family.</text>
</comment>
<comment type="caution">
    <text evidence="1">Originally thought to be a component of PSII; based on experiments in Synechocystis, N.tabacum and barley, and its absence from PSII in T.elongatus and T.vulcanus, this is probably not true.</text>
</comment>